<evidence type="ECO:0000269" key="1">
    <source>
    </source>
</evidence>
<evidence type="ECO:0000305" key="2"/>
<evidence type="ECO:0000312" key="3">
    <source>
        <dbReference type="EMBL" id="EEE63852.1"/>
    </source>
</evidence>
<dbReference type="EMBL" id="AC105318">
    <property type="protein sequence ID" value="AAV59313.1"/>
    <property type="molecule type" value="Genomic_DNA"/>
</dbReference>
<dbReference type="EMBL" id="AC134930">
    <property type="protein sequence ID" value="AAT07611.1"/>
    <property type="molecule type" value="Genomic_DNA"/>
</dbReference>
<dbReference type="EMBL" id="AP008211">
    <property type="protein sequence ID" value="BAF17570.1"/>
    <property type="molecule type" value="Genomic_DNA"/>
</dbReference>
<dbReference type="EMBL" id="AP014961">
    <property type="protein sequence ID" value="BAS94218.1"/>
    <property type="molecule type" value="Genomic_DNA"/>
</dbReference>
<dbReference type="EMBL" id="CM000142">
    <property type="protein sequence ID" value="EAZ34435.1"/>
    <property type="molecule type" value="Genomic_DNA"/>
</dbReference>
<dbReference type="EMBL" id="CM000142">
    <property type="protein sequence ID" value="EEE63852.1"/>
    <property type="molecule type" value="Genomic_DNA"/>
</dbReference>
<dbReference type="EMBL" id="AK103583">
    <property type="protein sequence ID" value="BAG96153.1"/>
    <property type="molecule type" value="mRNA"/>
</dbReference>
<dbReference type="RefSeq" id="XP_015640389.1">
    <property type="nucleotide sequence ID" value="XM_015784903.1"/>
</dbReference>
<dbReference type="SMR" id="Q75HX5"/>
<dbReference type="FunCoup" id="Q75HX5">
    <property type="interactions" value="2383"/>
</dbReference>
<dbReference type="STRING" id="39947.Q75HX5"/>
<dbReference type="PaxDb" id="39947-Q75HX5"/>
<dbReference type="EnsemblPlants" id="Os05t0437900-01">
    <property type="protein sequence ID" value="Os05t0437900-01"/>
    <property type="gene ID" value="Os05g0437900"/>
</dbReference>
<dbReference type="Gramene" id="Os05t0437900-01">
    <property type="protein sequence ID" value="Os05t0437900-01"/>
    <property type="gene ID" value="Os05g0437900"/>
</dbReference>
<dbReference type="KEGG" id="dosa:Os05g0437900"/>
<dbReference type="eggNOG" id="KOG2502">
    <property type="taxonomic scope" value="Eukaryota"/>
</dbReference>
<dbReference type="HOGENOM" id="CLU_028236_3_0_1"/>
<dbReference type="InParanoid" id="Q75HX5"/>
<dbReference type="OMA" id="SSCWAGL"/>
<dbReference type="OrthoDB" id="8775810at2759"/>
<dbReference type="Proteomes" id="UP000000763">
    <property type="component" value="Chromosome 5"/>
</dbReference>
<dbReference type="Proteomes" id="UP000007752">
    <property type="component" value="Chromosome 5"/>
</dbReference>
<dbReference type="Proteomes" id="UP000059680">
    <property type="component" value="Chromosome 5"/>
</dbReference>
<dbReference type="ExpressionAtlas" id="Q75HX5">
    <property type="expression patterns" value="baseline and differential"/>
</dbReference>
<dbReference type="CDD" id="cd22153">
    <property type="entry name" value="F-box_AtTLP-like"/>
    <property type="match status" value="1"/>
</dbReference>
<dbReference type="FunFam" id="3.20.90.10:FF:000003">
    <property type="entry name" value="Tubby-like F-box protein"/>
    <property type="match status" value="1"/>
</dbReference>
<dbReference type="Gene3D" id="1.20.1280.50">
    <property type="match status" value="1"/>
</dbReference>
<dbReference type="Gene3D" id="3.20.90.10">
    <property type="entry name" value="Tubby Protein, Chain A"/>
    <property type="match status" value="2"/>
</dbReference>
<dbReference type="InterPro" id="IPR036047">
    <property type="entry name" value="F-box-like_dom_sf"/>
</dbReference>
<dbReference type="InterPro" id="IPR001810">
    <property type="entry name" value="F-box_dom"/>
</dbReference>
<dbReference type="InterPro" id="IPR025659">
    <property type="entry name" value="Tubby-like_C"/>
</dbReference>
<dbReference type="InterPro" id="IPR000007">
    <property type="entry name" value="Tubby_C"/>
</dbReference>
<dbReference type="InterPro" id="IPR018066">
    <property type="entry name" value="Tubby_C_CS"/>
</dbReference>
<dbReference type="PANTHER" id="PTHR16517:SF149">
    <property type="entry name" value="TUBBY-LIKE F-BOX PROTEIN 8"/>
    <property type="match status" value="1"/>
</dbReference>
<dbReference type="PANTHER" id="PTHR16517">
    <property type="entry name" value="TUBBY-RELATED"/>
    <property type="match status" value="1"/>
</dbReference>
<dbReference type="Pfam" id="PF12937">
    <property type="entry name" value="F-box-like"/>
    <property type="match status" value="1"/>
</dbReference>
<dbReference type="Pfam" id="PF01167">
    <property type="entry name" value="Tub"/>
    <property type="match status" value="1"/>
</dbReference>
<dbReference type="PRINTS" id="PR01573">
    <property type="entry name" value="SUPERTUBBY"/>
</dbReference>
<dbReference type="SUPFAM" id="SSF81383">
    <property type="entry name" value="F-box domain"/>
    <property type="match status" value="1"/>
</dbReference>
<dbReference type="SUPFAM" id="SSF54518">
    <property type="entry name" value="Tubby C-terminal domain-like"/>
    <property type="match status" value="1"/>
</dbReference>
<dbReference type="PROSITE" id="PS01200">
    <property type="entry name" value="TUB_1"/>
    <property type="match status" value="1"/>
</dbReference>
<dbReference type="PROSITE" id="PS01201">
    <property type="entry name" value="TUB_2"/>
    <property type="match status" value="1"/>
</dbReference>
<organism>
    <name type="scientific">Oryza sativa subsp. japonica</name>
    <name type="common">Rice</name>
    <dbReference type="NCBI Taxonomy" id="39947"/>
    <lineage>
        <taxon>Eukaryota</taxon>
        <taxon>Viridiplantae</taxon>
        <taxon>Streptophyta</taxon>
        <taxon>Embryophyta</taxon>
        <taxon>Tracheophyta</taxon>
        <taxon>Spermatophyta</taxon>
        <taxon>Magnoliopsida</taxon>
        <taxon>Liliopsida</taxon>
        <taxon>Poales</taxon>
        <taxon>Poaceae</taxon>
        <taxon>BOP clade</taxon>
        <taxon>Oryzoideae</taxon>
        <taxon>Oryzeae</taxon>
        <taxon>Oryzinae</taxon>
        <taxon>Oryza</taxon>
        <taxon>Oryza sativa</taxon>
    </lineage>
</organism>
<feature type="chain" id="PRO_0000351127" description="Tubby-like F-box protein 8">
    <location>
        <begin position="1"/>
        <end position="445"/>
    </location>
</feature>
<feature type="domain" description="F-box">
    <location>
        <begin position="56"/>
        <end position="102"/>
    </location>
</feature>
<comment type="tissue specificity">
    <text evidence="1">Ubiquitous.</text>
</comment>
<comment type="similarity">
    <text evidence="2">Belongs to the TUB family.</text>
</comment>
<keyword id="KW-1185">Reference proteome</keyword>
<protein>
    <recommendedName>
        <fullName>Tubby-like F-box protein 8</fullName>
        <shortName>OsTLP8</shortName>
    </recommendedName>
    <alternativeName>
        <fullName>Tubby-like F-box protein 1</fullName>
        <shortName>OsTLP1</shortName>
    </alternativeName>
</protein>
<gene>
    <name type="primary">TULP8</name>
    <name type="synonym">TULP1</name>
    <name type="ordered locus">Os05g0437900</name>
    <name type="ordered locus">LOC_Os05g36190</name>
    <name type="ORF">OJ1058_F05.11</name>
    <name type="ORF">OsJ_017918</name>
    <name evidence="3" type="ORF">OsJ_18676</name>
    <name type="ORF">OSJNBb0042J17.6</name>
</gene>
<sequence length="445" mass="49555">MSFRSIVRDVRDSFGSLSRRSFEVTLAGLSGLTGHHRGKSQSTVHELCDADLIIQESRWASLPPELLRDVIRRLEASESTWPSRKDVVSCAAVCKAWREMCKEIVLSPEFCGKLTFPLSLKQPGPRDGMIQCFIKRDKSKSTYHLYLCLSTAVLADSGKFLLSAKRHRKTTCTEYVISMDADNISRSSSTYIGKLRSNFLGTKFIIYDTQPSYNGAVIPPVGRSSRRFNSKKVSPKMPSGSYNIAQVTYELNVLGTRGPRRMHCVMHSIPASSVEPGGIVPGQPEQIVPRAFEESFRSTTSFSKSSIMDRSMDFSSSRDFSSARFSDIAGGTINGDEEGQNKERPLVLRNKAPRWHEQLQCWCLNFRGRVTIASVKNFQLIAAPAQPPAGAPTPSQPAPPEQDKIILQFGKVAKDMFTMDYRYPLSAFQAFAICLSSFDTKLACE</sequence>
<name>TLP8_ORYSJ</name>
<accession>Q75HX5</accession>
<accession>B7EUV6</accession>
<proteinExistence type="evidence at transcript level"/>
<reference key="1">
    <citation type="journal article" date="2005" name="Mol. Genet. Genomics">
        <title>A fine physical map of the rice chromosome 5.</title>
        <authorList>
            <person name="Cheng C.-H."/>
            <person name="Chung M.C."/>
            <person name="Liu S.-M."/>
            <person name="Chen S.-K."/>
            <person name="Kao F.Y."/>
            <person name="Lin S.-J."/>
            <person name="Hsiao S.-H."/>
            <person name="Tseng I.C."/>
            <person name="Hsing Y.-I.C."/>
            <person name="Wu H.-P."/>
            <person name="Chen C.-S."/>
            <person name="Shaw J.-F."/>
            <person name="Wu J."/>
            <person name="Matsumoto T."/>
            <person name="Sasaki T."/>
            <person name="Chen H.-C."/>
            <person name="Chow T.-Y."/>
        </authorList>
    </citation>
    <scope>NUCLEOTIDE SEQUENCE [LARGE SCALE GENOMIC DNA]</scope>
    <source>
        <strain>cv. Nipponbare</strain>
    </source>
</reference>
<reference key="2">
    <citation type="journal article" date="2005" name="Nature">
        <title>The map-based sequence of the rice genome.</title>
        <authorList>
            <consortium name="International rice genome sequencing project (IRGSP)"/>
        </authorList>
    </citation>
    <scope>NUCLEOTIDE SEQUENCE [LARGE SCALE GENOMIC DNA]</scope>
    <source>
        <strain>cv. Nipponbare</strain>
    </source>
</reference>
<reference key="3">
    <citation type="journal article" date="2008" name="Nucleic Acids Res.">
        <title>The rice annotation project database (RAP-DB): 2008 update.</title>
        <authorList>
            <consortium name="The rice annotation project (RAP)"/>
        </authorList>
    </citation>
    <scope>GENOME REANNOTATION</scope>
    <source>
        <strain>cv. Nipponbare</strain>
    </source>
</reference>
<reference key="4">
    <citation type="journal article" date="2013" name="Rice">
        <title>Improvement of the Oryza sativa Nipponbare reference genome using next generation sequence and optical map data.</title>
        <authorList>
            <person name="Kawahara Y."/>
            <person name="de la Bastide M."/>
            <person name="Hamilton J.P."/>
            <person name="Kanamori H."/>
            <person name="McCombie W.R."/>
            <person name="Ouyang S."/>
            <person name="Schwartz D.C."/>
            <person name="Tanaka T."/>
            <person name="Wu J."/>
            <person name="Zhou S."/>
            <person name="Childs K.L."/>
            <person name="Davidson R.M."/>
            <person name="Lin H."/>
            <person name="Quesada-Ocampo L."/>
            <person name="Vaillancourt B."/>
            <person name="Sakai H."/>
            <person name="Lee S.S."/>
            <person name="Kim J."/>
            <person name="Numa H."/>
            <person name="Itoh T."/>
            <person name="Buell C.R."/>
            <person name="Matsumoto T."/>
        </authorList>
    </citation>
    <scope>GENOME REANNOTATION</scope>
    <source>
        <strain>cv. Nipponbare</strain>
    </source>
</reference>
<reference key="5">
    <citation type="journal article" date="2005" name="PLoS Biol.">
        <title>The genomes of Oryza sativa: a history of duplications.</title>
        <authorList>
            <person name="Yu J."/>
            <person name="Wang J."/>
            <person name="Lin W."/>
            <person name="Li S."/>
            <person name="Li H."/>
            <person name="Zhou J."/>
            <person name="Ni P."/>
            <person name="Dong W."/>
            <person name="Hu S."/>
            <person name="Zeng C."/>
            <person name="Zhang J."/>
            <person name="Zhang Y."/>
            <person name="Li R."/>
            <person name="Xu Z."/>
            <person name="Li S."/>
            <person name="Li X."/>
            <person name="Zheng H."/>
            <person name="Cong L."/>
            <person name="Lin L."/>
            <person name="Yin J."/>
            <person name="Geng J."/>
            <person name="Li G."/>
            <person name="Shi J."/>
            <person name="Liu J."/>
            <person name="Lv H."/>
            <person name="Li J."/>
            <person name="Wang J."/>
            <person name="Deng Y."/>
            <person name="Ran L."/>
            <person name="Shi X."/>
            <person name="Wang X."/>
            <person name="Wu Q."/>
            <person name="Li C."/>
            <person name="Ren X."/>
            <person name="Wang J."/>
            <person name="Wang X."/>
            <person name="Li D."/>
            <person name="Liu D."/>
            <person name="Zhang X."/>
            <person name="Ji Z."/>
            <person name="Zhao W."/>
            <person name="Sun Y."/>
            <person name="Zhang Z."/>
            <person name="Bao J."/>
            <person name="Han Y."/>
            <person name="Dong L."/>
            <person name="Ji J."/>
            <person name="Chen P."/>
            <person name="Wu S."/>
            <person name="Liu J."/>
            <person name="Xiao Y."/>
            <person name="Bu D."/>
            <person name="Tan J."/>
            <person name="Yang L."/>
            <person name="Ye C."/>
            <person name="Zhang J."/>
            <person name="Xu J."/>
            <person name="Zhou Y."/>
            <person name="Yu Y."/>
            <person name="Zhang B."/>
            <person name="Zhuang S."/>
            <person name="Wei H."/>
            <person name="Liu B."/>
            <person name="Lei M."/>
            <person name="Yu H."/>
            <person name="Li Y."/>
            <person name="Xu H."/>
            <person name="Wei S."/>
            <person name="He X."/>
            <person name="Fang L."/>
            <person name="Zhang Z."/>
            <person name="Zhang Y."/>
            <person name="Huang X."/>
            <person name="Su Z."/>
            <person name="Tong W."/>
            <person name="Li J."/>
            <person name="Tong Z."/>
            <person name="Li S."/>
            <person name="Ye J."/>
            <person name="Wang L."/>
            <person name="Fang L."/>
            <person name="Lei T."/>
            <person name="Chen C.-S."/>
            <person name="Chen H.-C."/>
            <person name="Xu Z."/>
            <person name="Li H."/>
            <person name="Huang H."/>
            <person name="Zhang F."/>
            <person name="Xu H."/>
            <person name="Li N."/>
            <person name="Zhao C."/>
            <person name="Li S."/>
            <person name="Dong L."/>
            <person name="Huang Y."/>
            <person name="Li L."/>
            <person name="Xi Y."/>
            <person name="Qi Q."/>
            <person name="Li W."/>
            <person name="Zhang B."/>
            <person name="Hu W."/>
            <person name="Zhang Y."/>
            <person name="Tian X."/>
            <person name="Jiao Y."/>
            <person name="Liang X."/>
            <person name="Jin J."/>
            <person name="Gao L."/>
            <person name="Zheng W."/>
            <person name="Hao B."/>
            <person name="Liu S.-M."/>
            <person name="Wang W."/>
            <person name="Yuan L."/>
            <person name="Cao M."/>
            <person name="McDermott J."/>
            <person name="Samudrala R."/>
            <person name="Wang J."/>
            <person name="Wong G.K.-S."/>
            <person name="Yang H."/>
        </authorList>
    </citation>
    <scope>NUCLEOTIDE SEQUENCE [LARGE SCALE GENOMIC DNA]</scope>
    <source>
        <strain>cv. Nipponbare</strain>
    </source>
</reference>
<reference key="6">
    <citation type="journal article" date="2003" name="Science">
        <title>Collection, mapping, and annotation of over 28,000 cDNA clones from japonica rice.</title>
        <authorList>
            <consortium name="The rice full-length cDNA consortium"/>
        </authorList>
    </citation>
    <scope>NUCLEOTIDE SEQUENCE [LARGE SCALE MRNA]</scope>
    <source>
        <strain>cv. Nipponbare</strain>
    </source>
</reference>
<reference key="7">
    <citation type="journal article" date="2008" name="FEBS J.">
        <title>Identification of rice TUBBY-like genes and their evolution.</title>
        <authorList>
            <person name="Liu Q."/>
        </authorList>
    </citation>
    <scope>GENE FAMILY</scope>
    <scope>NOMENCLATURE</scope>
</reference>
<reference key="8">
    <citation type="journal article" date="2008" name="Genomics">
        <title>Genomewide comparative phylogenetic and molecular evolutionary analysis of tubby-like protein family in Arabidopsis, rice, and poplar.</title>
        <authorList>
            <person name="Yang Z."/>
            <person name="Zhou Y."/>
            <person name="Wang X."/>
            <person name="Gu S."/>
            <person name="Yu J."/>
            <person name="Liang G."/>
            <person name="Yan C."/>
            <person name="Xu C."/>
        </authorList>
    </citation>
    <scope>TISSUE SPECIFICITY</scope>
    <scope>GENE FAMILY</scope>
    <scope>NOMENCLATURE</scope>
</reference>